<accession>P56341</accession>
<name>PSAA_CHLVU</name>
<keyword id="KW-0004">4Fe-4S</keyword>
<keyword id="KW-0148">Chlorophyll</keyword>
<keyword id="KW-0150">Chloroplast</keyword>
<keyword id="KW-0157">Chromophore</keyword>
<keyword id="KW-0249">Electron transport</keyword>
<keyword id="KW-0408">Iron</keyword>
<keyword id="KW-0411">Iron-sulfur</keyword>
<keyword id="KW-0460">Magnesium</keyword>
<keyword id="KW-0472">Membrane</keyword>
<keyword id="KW-0479">Metal-binding</keyword>
<keyword id="KW-0560">Oxidoreductase</keyword>
<keyword id="KW-0602">Photosynthesis</keyword>
<keyword id="KW-0603">Photosystem I</keyword>
<keyword id="KW-0934">Plastid</keyword>
<keyword id="KW-0793">Thylakoid</keyword>
<keyword id="KW-0812">Transmembrane</keyword>
<keyword id="KW-1133">Transmembrane helix</keyword>
<keyword id="KW-0813">Transport</keyword>
<geneLocation type="chloroplast"/>
<sequence>MTISPPEREAKKVKIVVDRNPVATNFEKWAKPGHFSRTLSKGPTTTTWIWNLHADAHDFDTQTSDLEEISRKVFSAHFGQLGIIFIWLSGMYFHGARFSNYEAWLTDPTHIKPSAQVVWPIVGQEILNADVGGGFQGLQITSGFFQLWRASGITSELQLYTTAIGGLVMAAAMFFAGWFHYHKAAPKLEWFQNVESMLNHHLAGLLGLGSLAWAGHQIHVSLPINKLLDAGVDPKEIPLPHEFLFNPELMAQLYPSFAKGLAPFFTLDWAQYSDFLTFQGGLNPVTGGLWLTDTVHHHLAIAVLFLVAGHQYRTNWGIGSSLKEILEAHKGPFTGEGHKGLYEILTTSWHAQLAINLALFGSLSIIVSHHMYAMPPYPYLATDYGTQLSLFTHHMWIGGFCIVGAGAHAGIFMVRDYDPTNNYNNLLDRVLRHRDAMISHLNWVCIFLGFHSFGLYIHNDTMSALGRPQDMFSDTAIQLQPVFAQWVQNTHFLAPGFTAPNALASTSPSWGGDVVAVGGKVAMMPISLGTADFMVHHIHAFTIHVTVLILLKGVLYARSSRLIPDKANLGFRFPCDGPGRGGTCQVSAWDHVFLGLFWMYNSISIVIFHFSWKMQSDVWGTVSANGVSHITGGNFAQSANTINGWLRDFLWAQSSQVIQSYGSALSAYGLIFLGAHFVWAFSLMFLFSGRGYWQELIESIVWAHNKLKVAPAIQPRALSITQGRAVGVAHYLLGGIATTWSFFLARILAVG</sequence>
<feature type="chain" id="PRO_0000088540" description="Photosystem I P700 chlorophyll a apoprotein A1">
    <location>
        <begin position="1"/>
        <end position="751"/>
    </location>
</feature>
<feature type="transmembrane region" description="Helical; Name=I" evidence="1">
    <location>
        <begin position="73"/>
        <end position="96"/>
    </location>
</feature>
<feature type="transmembrane region" description="Helical; Name=II" evidence="1">
    <location>
        <begin position="159"/>
        <end position="182"/>
    </location>
</feature>
<feature type="transmembrane region" description="Helical; Name=III" evidence="1">
    <location>
        <begin position="198"/>
        <end position="222"/>
    </location>
</feature>
<feature type="transmembrane region" description="Helical; Name=IV" evidence="1">
    <location>
        <begin position="294"/>
        <end position="312"/>
    </location>
</feature>
<feature type="transmembrane region" description="Helical; Name=V" evidence="1">
    <location>
        <begin position="349"/>
        <end position="372"/>
    </location>
</feature>
<feature type="transmembrane region" description="Helical; Name=VI" evidence="1">
    <location>
        <begin position="388"/>
        <end position="414"/>
    </location>
</feature>
<feature type="transmembrane region" description="Helical; Name=VII" evidence="1">
    <location>
        <begin position="436"/>
        <end position="458"/>
    </location>
</feature>
<feature type="transmembrane region" description="Helical; Name=VIII" evidence="1">
    <location>
        <begin position="533"/>
        <end position="551"/>
    </location>
</feature>
<feature type="transmembrane region" description="Helical; Name=IX" evidence="1">
    <location>
        <begin position="591"/>
        <end position="612"/>
    </location>
</feature>
<feature type="transmembrane region" description="Helical; Name=X" evidence="1">
    <location>
        <begin position="665"/>
        <end position="687"/>
    </location>
</feature>
<feature type="transmembrane region" description="Helical; Name=XI" evidence="1">
    <location>
        <begin position="725"/>
        <end position="745"/>
    </location>
</feature>
<feature type="binding site" evidence="1">
    <location>
        <position position="575"/>
    </location>
    <ligand>
        <name>[4Fe-4S] cluster</name>
        <dbReference type="ChEBI" id="CHEBI:49883"/>
        <note>ligand shared between dimeric partners</note>
    </ligand>
</feature>
<feature type="binding site" evidence="1">
    <location>
        <position position="584"/>
    </location>
    <ligand>
        <name>[4Fe-4S] cluster</name>
        <dbReference type="ChEBI" id="CHEBI:49883"/>
        <note>ligand shared between dimeric partners</note>
    </ligand>
</feature>
<feature type="binding site" description="axial binding residue" evidence="1">
    <location>
        <position position="676"/>
    </location>
    <ligand>
        <name>chlorophyll a'</name>
        <dbReference type="ChEBI" id="CHEBI:189419"/>
        <label>A1</label>
    </ligand>
    <ligandPart>
        <name>Mg</name>
        <dbReference type="ChEBI" id="CHEBI:25107"/>
    </ligandPart>
</feature>
<feature type="binding site" description="axial binding residue" evidence="1">
    <location>
        <position position="684"/>
    </location>
    <ligand>
        <name>chlorophyll a</name>
        <dbReference type="ChEBI" id="CHEBI:58416"/>
        <label>A3</label>
    </ligand>
    <ligandPart>
        <name>Mg</name>
        <dbReference type="ChEBI" id="CHEBI:25107"/>
    </ligandPart>
</feature>
<feature type="binding site" evidence="1">
    <location>
        <position position="692"/>
    </location>
    <ligand>
        <name>chlorophyll a</name>
        <dbReference type="ChEBI" id="CHEBI:58416"/>
        <label>A3</label>
    </ligand>
</feature>
<feature type="binding site" evidence="1">
    <location>
        <position position="693"/>
    </location>
    <ligand>
        <name>phylloquinone</name>
        <dbReference type="ChEBI" id="CHEBI:18067"/>
        <label>A</label>
    </ligand>
</feature>
<reference key="1">
    <citation type="journal article" date="1997" name="Proc. Natl. Acad. Sci. U.S.A.">
        <title>Complete nucleotide sequence of the chloroplast genome from the green alga Chlorella vulgaris: the existence of genes possibly involved in chloroplast division.</title>
        <authorList>
            <person name="Wakasugi T."/>
            <person name="Nagai T."/>
            <person name="Kapoor M."/>
            <person name="Sugita M."/>
            <person name="Ito M."/>
            <person name="Ito S."/>
            <person name="Tsudzuki J."/>
            <person name="Nakashima K."/>
            <person name="Tsudzuki T."/>
            <person name="Suzuki Y."/>
            <person name="Hamada A."/>
            <person name="Ohta T."/>
            <person name="Inamura A."/>
            <person name="Yoshinaga K."/>
            <person name="Sugiura M."/>
        </authorList>
    </citation>
    <scope>NUCLEOTIDE SEQUENCE [LARGE SCALE GENOMIC DNA]</scope>
    <source>
        <strain>IAM C-27 / Tamiya</strain>
    </source>
</reference>
<organism>
    <name type="scientific">Chlorella vulgaris</name>
    <name type="common">Green alga</name>
    <dbReference type="NCBI Taxonomy" id="3077"/>
    <lineage>
        <taxon>Eukaryota</taxon>
        <taxon>Viridiplantae</taxon>
        <taxon>Chlorophyta</taxon>
        <taxon>core chlorophytes</taxon>
        <taxon>Trebouxiophyceae</taxon>
        <taxon>Chlorellales</taxon>
        <taxon>Chlorellaceae</taxon>
        <taxon>Chlorella clade</taxon>
        <taxon>Chlorella</taxon>
    </lineage>
</organism>
<dbReference type="EC" id="1.97.1.12" evidence="1"/>
<dbReference type="EMBL" id="AB001684">
    <property type="protein sequence ID" value="BAA57926.1"/>
    <property type="molecule type" value="Genomic_DNA"/>
</dbReference>
<dbReference type="PIR" id="T07278">
    <property type="entry name" value="T07278"/>
</dbReference>
<dbReference type="RefSeq" id="NP_045850.1">
    <property type="nucleotide sequence ID" value="NC_001865.1"/>
</dbReference>
<dbReference type="SMR" id="P56341"/>
<dbReference type="GeneID" id="809133"/>
<dbReference type="OrthoDB" id="15at2759"/>
<dbReference type="GO" id="GO:0009535">
    <property type="term" value="C:chloroplast thylakoid membrane"/>
    <property type="evidence" value="ECO:0007669"/>
    <property type="project" value="UniProtKB-SubCell"/>
</dbReference>
<dbReference type="GO" id="GO:0009522">
    <property type="term" value="C:photosystem I"/>
    <property type="evidence" value="ECO:0007669"/>
    <property type="project" value="UniProtKB-KW"/>
</dbReference>
<dbReference type="GO" id="GO:0051539">
    <property type="term" value="F:4 iron, 4 sulfur cluster binding"/>
    <property type="evidence" value="ECO:0007669"/>
    <property type="project" value="UniProtKB-KW"/>
</dbReference>
<dbReference type="GO" id="GO:0016168">
    <property type="term" value="F:chlorophyll binding"/>
    <property type="evidence" value="ECO:0007669"/>
    <property type="project" value="UniProtKB-KW"/>
</dbReference>
<dbReference type="GO" id="GO:0009055">
    <property type="term" value="F:electron transfer activity"/>
    <property type="evidence" value="ECO:0007669"/>
    <property type="project" value="UniProtKB-UniRule"/>
</dbReference>
<dbReference type="GO" id="GO:0000287">
    <property type="term" value="F:magnesium ion binding"/>
    <property type="evidence" value="ECO:0007669"/>
    <property type="project" value="UniProtKB-UniRule"/>
</dbReference>
<dbReference type="GO" id="GO:0016491">
    <property type="term" value="F:oxidoreductase activity"/>
    <property type="evidence" value="ECO:0007669"/>
    <property type="project" value="UniProtKB-KW"/>
</dbReference>
<dbReference type="GO" id="GO:0015979">
    <property type="term" value="P:photosynthesis"/>
    <property type="evidence" value="ECO:0007669"/>
    <property type="project" value="UniProtKB-UniRule"/>
</dbReference>
<dbReference type="FunFam" id="1.20.1130.10:FF:000001">
    <property type="entry name" value="Photosystem I P700 chlorophyll a apoprotein A2"/>
    <property type="match status" value="1"/>
</dbReference>
<dbReference type="Gene3D" id="1.20.1130.10">
    <property type="entry name" value="Photosystem I PsaA/PsaB"/>
    <property type="match status" value="1"/>
</dbReference>
<dbReference type="HAMAP" id="MF_00458">
    <property type="entry name" value="PSI_PsaA"/>
    <property type="match status" value="1"/>
</dbReference>
<dbReference type="InterPro" id="IPR006243">
    <property type="entry name" value="PSI_PsaA"/>
</dbReference>
<dbReference type="InterPro" id="IPR001280">
    <property type="entry name" value="PSI_PsaA/B"/>
</dbReference>
<dbReference type="InterPro" id="IPR020586">
    <property type="entry name" value="PSI_PsaA/B_CS"/>
</dbReference>
<dbReference type="InterPro" id="IPR036408">
    <property type="entry name" value="PSI_PsaA/B_sf"/>
</dbReference>
<dbReference type="NCBIfam" id="TIGR01335">
    <property type="entry name" value="psaA"/>
    <property type="match status" value="1"/>
</dbReference>
<dbReference type="PANTHER" id="PTHR30128">
    <property type="entry name" value="OUTER MEMBRANE PROTEIN, OMPA-RELATED"/>
    <property type="match status" value="1"/>
</dbReference>
<dbReference type="PANTHER" id="PTHR30128:SF19">
    <property type="entry name" value="PHOTOSYSTEM I P700 CHLOROPHYLL A APOPROTEIN A1-RELATED"/>
    <property type="match status" value="1"/>
</dbReference>
<dbReference type="Pfam" id="PF00223">
    <property type="entry name" value="PsaA_PsaB"/>
    <property type="match status" value="1"/>
</dbReference>
<dbReference type="PIRSF" id="PIRSF002905">
    <property type="entry name" value="PSI_A"/>
    <property type="match status" value="1"/>
</dbReference>
<dbReference type="PRINTS" id="PR00257">
    <property type="entry name" value="PHOTSYSPSAAB"/>
</dbReference>
<dbReference type="SUPFAM" id="SSF81558">
    <property type="entry name" value="Photosystem I subunits PsaA/PsaB"/>
    <property type="match status" value="1"/>
</dbReference>
<dbReference type="PROSITE" id="PS00419">
    <property type="entry name" value="PHOTOSYSTEM_I_PSAAB"/>
    <property type="match status" value="1"/>
</dbReference>
<evidence type="ECO:0000255" key="1">
    <source>
        <dbReference type="HAMAP-Rule" id="MF_00458"/>
    </source>
</evidence>
<proteinExistence type="inferred from homology"/>
<comment type="function">
    <text>PsaA and PsaB bind P700, the primary electron donor of photosystem I (PSI), as well as the electron acceptors A0, A1 and FX. PSI is a plastocyanin/cytochrome c6-ferredoxin oxidoreductase, converting photonic excitation into a charge separation, which transfers an electron from the donor P700 chlorophyll pair to the spectroscopically characterized acceptors A0, A1, FX, FA and FB in turn. Oxidized P700 is reduced on the lumenal side of the thylakoid membrane by plastocyanin or cytochrome c6.</text>
</comment>
<comment type="catalytic activity">
    <reaction evidence="1">
        <text>reduced [plastocyanin] + hnu + oxidized [2Fe-2S]-[ferredoxin] = oxidized [plastocyanin] + reduced [2Fe-2S]-[ferredoxin]</text>
        <dbReference type="Rhea" id="RHEA:30407"/>
        <dbReference type="Rhea" id="RHEA-COMP:10000"/>
        <dbReference type="Rhea" id="RHEA-COMP:10001"/>
        <dbReference type="Rhea" id="RHEA-COMP:10039"/>
        <dbReference type="Rhea" id="RHEA-COMP:10040"/>
        <dbReference type="ChEBI" id="CHEBI:29036"/>
        <dbReference type="ChEBI" id="CHEBI:30212"/>
        <dbReference type="ChEBI" id="CHEBI:33737"/>
        <dbReference type="ChEBI" id="CHEBI:33738"/>
        <dbReference type="ChEBI" id="CHEBI:49552"/>
        <dbReference type="EC" id="1.97.1.12"/>
    </reaction>
</comment>
<comment type="cofactor">
    <text evidence="1">P700 is a chlorophyll a/chlorophyll a' dimer, A0 is one or more chlorophyll a, A1 is one or both phylloquinones and FX is a shared 4Fe-4S iron-sulfur center.</text>
</comment>
<comment type="subunit">
    <text evidence="1">The PsaA/B heterodimer binds the P700 chlorophyll special pair and subsequent electron acceptors. PSI consists of a core antenna complex that captures photons, and an electron transfer chain that converts photonic excitation into a charge separation. The eukaryotic PSI reaction center is composed of at least 11 subunits.</text>
</comment>
<comment type="subcellular location">
    <subcellularLocation>
        <location evidence="1">Plastid</location>
        <location evidence="1">Chloroplast thylakoid membrane</location>
        <topology evidence="1">Multi-pass membrane protein</topology>
    </subcellularLocation>
</comment>
<comment type="similarity">
    <text evidence="1">Belongs to the PsaA/PsaB family.</text>
</comment>
<protein>
    <recommendedName>
        <fullName evidence="1">Photosystem I P700 chlorophyll a apoprotein A1</fullName>
        <ecNumber evidence="1">1.97.1.12</ecNumber>
    </recommendedName>
    <alternativeName>
        <fullName evidence="1">PSI-A</fullName>
    </alternativeName>
    <alternativeName>
        <fullName evidence="1">PsaA</fullName>
    </alternativeName>
</protein>
<gene>
    <name evidence="1" type="primary">psaA</name>
</gene>